<gene>
    <name evidence="1" type="primary">aspS</name>
    <name type="ordered locus">DIP1353</name>
</gene>
<name>SYDND_CORDI</name>
<reference key="1">
    <citation type="journal article" date="2003" name="Nucleic Acids Res.">
        <title>The complete genome sequence and analysis of Corynebacterium diphtheriae NCTC13129.</title>
        <authorList>
            <person name="Cerdeno-Tarraga A.-M."/>
            <person name="Efstratiou A."/>
            <person name="Dover L.G."/>
            <person name="Holden M.T.G."/>
            <person name="Pallen M.J."/>
            <person name="Bentley S.D."/>
            <person name="Besra G.S."/>
            <person name="Churcher C.M."/>
            <person name="James K.D."/>
            <person name="De Zoysa A."/>
            <person name="Chillingworth T."/>
            <person name="Cronin A."/>
            <person name="Dowd L."/>
            <person name="Feltwell T."/>
            <person name="Hamlin N."/>
            <person name="Holroyd S."/>
            <person name="Jagels K."/>
            <person name="Moule S."/>
            <person name="Quail M.A."/>
            <person name="Rabbinowitsch E."/>
            <person name="Rutherford K.M."/>
            <person name="Thomson N.R."/>
            <person name="Unwin L."/>
            <person name="Whitehead S."/>
            <person name="Barrell B.G."/>
            <person name="Parkhill J."/>
        </authorList>
    </citation>
    <scope>NUCLEOTIDE SEQUENCE [LARGE SCALE GENOMIC DNA]</scope>
    <source>
        <strain>ATCC 700971 / NCTC 13129 / Biotype gravis</strain>
    </source>
</reference>
<dbReference type="EC" id="6.1.1.23" evidence="1"/>
<dbReference type="EMBL" id="BX248357">
    <property type="protein sequence ID" value="CAE49881.1"/>
    <property type="molecule type" value="Genomic_DNA"/>
</dbReference>
<dbReference type="SMR" id="Q6NGZ4"/>
<dbReference type="STRING" id="257309.DIP1353"/>
<dbReference type="KEGG" id="cdi:DIP1353"/>
<dbReference type="PATRIC" id="fig|257309.4.peg.1332"/>
<dbReference type="HOGENOM" id="CLU_014330_3_2_11"/>
<dbReference type="Proteomes" id="UP000002198">
    <property type="component" value="Chromosome"/>
</dbReference>
<dbReference type="GO" id="GO:0005737">
    <property type="term" value="C:cytoplasm"/>
    <property type="evidence" value="ECO:0007669"/>
    <property type="project" value="UniProtKB-SubCell"/>
</dbReference>
<dbReference type="GO" id="GO:0004815">
    <property type="term" value="F:aspartate-tRNA ligase activity"/>
    <property type="evidence" value="ECO:0007669"/>
    <property type="project" value="UniProtKB-UniRule"/>
</dbReference>
<dbReference type="GO" id="GO:0050560">
    <property type="term" value="F:aspartate-tRNA(Asn) ligase activity"/>
    <property type="evidence" value="ECO:0007669"/>
    <property type="project" value="UniProtKB-EC"/>
</dbReference>
<dbReference type="GO" id="GO:0005524">
    <property type="term" value="F:ATP binding"/>
    <property type="evidence" value="ECO:0007669"/>
    <property type="project" value="UniProtKB-UniRule"/>
</dbReference>
<dbReference type="GO" id="GO:0003676">
    <property type="term" value="F:nucleic acid binding"/>
    <property type="evidence" value="ECO:0007669"/>
    <property type="project" value="InterPro"/>
</dbReference>
<dbReference type="GO" id="GO:0006422">
    <property type="term" value="P:aspartyl-tRNA aminoacylation"/>
    <property type="evidence" value="ECO:0007669"/>
    <property type="project" value="UniProtKB-UniRule"/>
</dbReference>
<dbReference type="CDD" id="cd00777">
    <property type="entry name" value="AspRS_core"/>
    <property type="match status" value="1"/>
</dbReference>
<dbReference type="CDD" id="cd04317">
    <property type="entry name" value="EcAspRS_like_N"/>
    <property type="match status" value="1"/>
</dbReference>
<dbReference type="Gene3D" id="3.30.930.10">
    <property type="entry name" value="Bira Bifunctional Protein, Domain 2"/>
    <property type="match status" value="1"/>
</dbReference>
<dbReference type="Gene3D" id="3.30.1360.30">
    <property type="entry name" value="GAD-like domain"/>
    <property type="match status" value="1"/>
</dbReference>
<dbReference type="Gene3D" id="2.40.50.140">
    <property type="entry name" value="Nucleic acid-binding proteins"/>
    <property type="match status" value="1"/>
</dbReference>
<dbReference type="HAMAP" id="MF_00044">
    <property type="entry name" value="Asp_tRNA_synth_type1"/>
    <property type="match status" value="1"/>
</dbReference>
<dbReference type="InterPro" id="IPR004364">
    <property type="entry name" value="Aa-tRNA-synt_II"/>
</dbReference>
<dbReference type="InterPro" id="IPR006195">
    <property type="entry name" value="aa-tRNA-synth_II"/>
</dbReference>
<dbReference type="InterPro" id="IPR045864">
    <property type="entry name" value="aa-tRNA-synth_II/BPL/LPL"/>
</dbReference>
<dbReference type="InterPro" id="IPR004524">
    <property type="entry name" value="Asp-tRNA-ligase_1"/>
</dbReference>
<dbReference type="InterPro" id="IPR047089">
    <property type="entry name" value="Asp-tRNA-ligase_1_N"/>
</dbReference>
<dbReference type="InterPro" id="IPR002312">
    <property type="entry name" value="Asp/Asn-tRNA-synth_IIb"/>
</dbReference>
<dbReference type="InterPro" id="IPR047090">
    <property type="entry name" value="AspRS_core"/>
</dbReference>
<dbReference type="InterPro" id="IPR004115">
    <property type="entry name" value="GAD-like_sf"/>
</dbReference>
<dbReference type="InterPro" id="IPR029351">
    <property type="entry name" value="GAD_dom"/>
</dbReference>
<dbReference type="InterPro" id="IPR012340">
    <property type="entry name" value="NA-bd_OB-fold"/>
</dbReference>
<dbReference type="InterPro" id="IPR004365">
    <property type="entry name" value="NA-bd_OB_tRNA"/>
</dbReference>
<dbReference type="NCBIfam" id="TIGR00459">
    <property type="entry name" value="aspS_bact"/>
    <property type="match status" value="1"/>
</dbReference>
<dbReference type="NCBIfam" id="NF001750">
    <property type="entry name" value="PRK00476.1"/>
    <property type="match status" value="1"/>
</dbReference>
<dbReference type="PANTHER" id="PTHR22594:SF5">
    <property type="entry name" value="ASPARTATE--TRNA LIGASE, MITOCHONDRIAL"/>
    <property type="match status" value="1"/>
</dbReference>
<dbReference type="PANTHER" id="PTHR22594">
    <property type="entry name" value="ASPARTYL/LYSYL-TRNA SYNTHETASE"/>
    <property type="match status" value="1"/>
</dbReference>
<dbReference type="Pfam" id="PF02938">
    <property type="entry name" value="GAD"/>
    <property type="match status" value="1"/>
</dbReference>
<dbReference type="Pfam" id="PF00152">
    <property type="entry name" value="tRNA-synt_2"/>
    <property type="match status" value="1"/>
</dbReference>
<dbReference type="Pfam" id="PF01336">
    <property type="entry name" value="tRNA_anti-codon"/>
    <property type="match status" value="1"/>
</dbReference>
<dbReference type="PRINTS" id="PR01042">
    <property type="entry name" value="TRNASYNTHASP"/>
</dbReference>
<dbReference type="SUPFAM" id="SSF55681">
    <property type="entry name" value="Class II aaRS and biotin synthetases"/>
    <property type="match status" value="1"/>
</dbReference>
<dbReference type="SUPFAM" id="SSF55261">
    <property type="entry name" value="GAD domain-like"/>
    <property type="match status" value="1"/>
</dbReference>
<dbReference type="SUPFAM" id="SSF50249">
    <property type="entry name" value="Nucleic acid-binding proteins"/>
    <property type="match status" value="1"/>
</dbReference>
<dbReference type="PROSITE" id="PS50862">
    <property type="entry name" value="AA_TRNA_LIGASE_II"/>
    <property type="match status" value="1"/>
</dbReference>
<organism>
    <name type="scientific">Corynebacterium diphtheriae (strain ATCC 700971 / NCTC 13129 / Biotype gravis)</name>
    <dbReference type="NCBI Taxonomy" id="257309"/>
    <lineage>
        <taxon>Bacteria</taxon>
        <taxon>Bacillati</taxon>
        <taxon>Actinomycetota</taxon>
        <taxon>Actinomycetes</taxon>
        <taxon>Mycobacteriales</taxon>
        <taxon>Corynebacteriaceae</taxon>
        <taxon>Corynebacterium</taxon>
    </lineage>
</organism>
<evidence type="ECO:0000255" key="1">
    <source>
        <dbReference type="HAMAP-Rule" id="MF_00044"/>
    </source>
</evidence>
<evidence type="ECO:0000256" key="2">
    <source>
        <dbReference type="SAM" id="MobiDB-lite"/>
    </source>
</evidence>
<sequence length="601" mass="66474">MHVLRTHLAGDLGKETAGQTVTLTGWVSRRRDHGGVIFIDLRDSSGLVQVVFRENDVAEQAHHLRSEFCIKVTGEVEARPEGSENPNLASGAIEVNVTDLEILNEAAPLPFQIDDVSQGGEVGEETRLKYRYLDLRRPNQGAALRLRSQANKAARNVLDSHDFVEIETPTLTRSTPEGARDFLVPARLKPGSWYALPQSPQLFKQLLMVAGMERYYQIARCYRDEDFRADRQPEFTQLDIEMSFVDQDDVIALAEEIVSSLWKLIGYEIPTPIPRMTYADAMRLYGSDKPDLRFDIKIVECTDFFKNTTFRVFQNEYVGAVVMDGGASQPRRQLDAWQEWAKQRGAKGLAYILVGENGELTGPVSKNITDEERAGIAAHVGAKPGDCIFFAAGETKSSRALLGAARNEIAKKLDLIKEGDWAFTWVVDAPLFEPSSDATASGDVALGHSKWTAVHHAFTSPKPEWLDSFDENPGEATAYAYDIVCNGNEIGGGSIRIHRRDVQERVFKVMGITEDEAREKFGFLLDAFAFGAPPHGGIAFGWDRIVSLLGGFSSIRDVIAFPKSGGGVDPLTDAPAPIPLEQRRETGVDFKPKKKTDESAV</sequence>
<keyword id="KW-0030">Aminoacyl-tRNA synthetase</keyword>
<keyword id="KW-0067">ATP-binding</keyword>
<keyword id="KW-0963">Cytoplasm</keyword>
<keyword id="KW-0436">Ligase</keyword>
<keyword id="KW-0547">Nucleotide-binding</keyword>
<keyword id="KW-0648">Protein biosynthesis</keyword>
<keyword id="KW-1185">Reference proteome</keyword>
<protein>
    <recommendedName>
        <fullName evidence="1">Aspartate--tRNA(Asp/Asn) ligase</fullName>
        <ecNumber evidence="1">6.1.1.23</ecNumber>
    </recommendedName>
    <alternativeName>
        <fullName evidence="1">Aspartyl-tRNA synthetase</fullName>
        <shortName evidence="1">AspRS</shortName>
    </alternativeName>
    <alternativeName>
        <fullName evidence="1">Non-discriminating aspartyl-tRNA synthetase</fullName>
        <shortName evidence="1">ND-AspRS</shortName>
    </alternativeName>
</protein>
<accession>Q6NGZ4</accession>
<comment type="function">
    <text evidence="1">Aspartyl-tRNA synthetase with relaxed tRNA specificity since it is able to aspartylate not only its cognate tRNA(Asp) but also tRNA(Asn). Reaction proceeds in two steps: L-aspartate is first activated by ATP to form Asp-AMP and then transferred to the acceptor end of tRNA(Asp/Asn).</text>
</comment>
<comment type="catalytic activity">
    <reaction evidence="1">
        <text>tRNA(Asx) + L-aspartate + ATP = L-aspartyl-tRNA(Asx) + AMP + diphosphate</text>
        <dbReference type="Rhea" id="RHEA:18349"/>
        <dbReference type="Rhea" id="RHEA-COMP:9710"/>
        <dbReference type="Rhea" id="RHEA-COMP:9711"/>
        <dbReference type="ChEBI" id="CHEBI:29991"/>
        <dbReference type="ChEBI" id="CHEBI:30616"/>
        <dbReference type="ChEBI" id="CHEBI:33019"/>
        <dbReference type="ChEBI" id="CHEBI:78442"/>
        <dbReference type="ChEBI" id="CHEBI:78516"/>
        <dbReference type="ChEBI" id="CHEBI:456215"/>
        <dbReference type="EC" id="6.1.1.23"/>
    </reaction>
</comment>
<comment type="subunit">
    <text evidence="1">Homodimer.</text>
</comment>
<comment type="subcellular location">
    <subcellularLocation>
        <location evidence="1">Cytoplasm</location>
    </subcellularLocation>
</comment>
<comment type="similarity">
    <text evidence="1">Belongs to the class-II aminoacyl-tRNA synthetase family. Type 1 subfamily.</text>
</comment>
<proteinExistence type="inferred from homology"/>
<feature type="chain" id="PRO_0000110861" description="Aspartate--tRNA(Asp/Asn) ligase">
    <location>
        <begin position="1"/>
        <end position="601"/>
    </location>
</feature>
<feature type="region of interest" description="Aspartate" evidence="1">
    <location>
        <begin position="201"/>
        <end position="204"/>
    </location>
</feature>
<feature type="region of interest" description="Disordered" evidence="2">
    <location>
        <begin position="568"/>
        <end position="601"/>
    </location>
</feature>
<feature type="compositionally biased region" description="Basic and acidic residues" evidence="2">
    <location>
        <begin position="581"/>
        <end position="601"/>
    </location>
</feature>
<feature type="binding site" evidence="1">
    <location>
        <position position="177"/>
    </location>
    <ligand>
        <name>L-aspartate</name>
        <dbReference type="ChEBI" id="CHEBI:29991"/>
    </ligand>
</feature>
<feature type="binding site" evidence="1">
    <location>
        <begin position="223"/>
        <end position="225"/>
    </location>
    <ligand>
        <name>ATP</name>
        <dbReference type="ChEBI" id="CHEBI:30616"/>
    </ligand>
</feature>
<feature type="binding site" evidence="1">
    <location>
        <position position="223"/>
    </location>
    <ligand>
        <name>L-aspartate</name>
        <dbReference type="ChEBI" id="CHEBI:29991"/>
    </ligand>
</feature>
<feature type="binding site" evidence="1">
    <location>
        <position position="232"/>
    </location>
    <ligand>
        <name>ATP</name>
        <dbReference type="ChEBI" id="CHEBI:30616"/>
    </ligand>
</feature>
<feature type="binding site" evidence="1">
    <location>
        <position position="455"/>
    </location>
    <ligand>
        <name>L-aspartate</name>
        <dbReference type="ChEBI" id="CHEBI:29991"/>
    </ligand>
</feature>
<feature type="binding site" evidence="1">
    <location>
        <position position="489"/>
    </location>
    <ligand>
        <name>ATP</name>
        <dbReference type="ChEBI" id="CHEBI:30616"/>
    </ligand>
</feature>
<feature type="binding site" evidence="1">
    <location>
        <position position="496"/>
    </location>
    <ligand>
        <name>L-aspartate</name>
        <dbReference type="ChEBI" id="CHEBI:29991"/>
    </ligand>
</feature>
<feature type="binding site" evidence="1">
    <location>
        <begin position="541"/>
        <end position="544"/>
    </location>
    <ligand>
        <name>ATP</name>
        <dbReference type="ChEBI" id="CHEBI:30616"/>
    </ligand>
</feature>
<feature type="site" description="Important for tRNA non-discrimination" evidence="1">
    <location>
        <position position="33"/>
    </location>
</feature>
<feature type="site" description="Important for tRNA non-discrimination" evidence="1">
    <location>
        <position position="82"/>
    </location>
</feature>